<comment type="function">
    <text evidence="1">NDH-1 shuttles electrons from NADH, via FMN and iron-sulfur (Fe-S) centers, to quinones in the respiratory chain. The immediate electron acceptor for the enzyme in this species is believed to be ubiquinone. Couples the redox reaction to proton translocation (for every two electrons transferred, four hydrogen ions are translocated across the cytoplasmic membrane), and thus conserves the redox energy in a proton gradient.</text>
</comment>
<comment type="catalytic activity">
    <reaction evidence="1">
        <text>a quinone + NADH + 5 H(+)(in) = a quinol + NAD(+) + 4 H(+)(out)</text>
        <dbReference type="Rhea" id="RHEA:57888"/>
        <dbReference type="ChEBI" id="CHEBI:15378"/>
        <dbReference type="ChEBI" id="CHEBI:24646"/>
        <dbReference type="ChEBI" id="CHEBI:57540"/>
        <dbReference type="ChEBI" id="CHEBI:57945"/>
        <dbReference type="ChEBI" id="CHEBI:132124"/>
    </reaction>
</comment>
<comment type="subunit">
    <text evidence="1">NDH-1 is composed of 14 different subunits. Subunits NuoA, H, J, K, L, M, N constitute the membrane sector of the complex.</text>
</comment>
<comment type="subcellular location">
    <subcellularLocation>
        <location evidence="1">Cell inner membrane</location>
        <topology evidence="1">Multi-pass membrane protein</topology>
    </subcellularLocation>
</comment>
<comment type="similarity">
    <text evidence="1">Belongs to the complex I subunit 4L family.</text>
</comment>
<accession>Q3J3E7</accession>
<dbReference type="EC" id="7.1.1.-" evidence="1"/>
<dbReference type="EMBL" id="CP000143">
    <property type="protein sequence ID" value="ABA78687.1"/>
    <property type="molecule type" value="Genomic_DNA"/>
</dbReference>
<dbReference type="RefSeq" id="WP_002719678.1">
    <property type="nucleotide sequence ID" value="NZ_CP030271.1"/>
</dbReference>
<dbReference type="RefSeq" id="YP_352588.1">
    <property type="nucleotide sequence ID" value="NC_007493.2"/>
</dbReference>
<dbReference type="SMR" id="Q3J3E7"/>
<dbReference type="STRING" id="272943.RSP_2526"/>
<dbReference type="EnsemblBacteria" id="ABA78687">
    <property type="protein sequence ID" value="ABA78687"/>
    <property type="gene ID" value="RSP_2526"/>
</dbReference>
<dbReference type="GeneID" id="67446282"/>
<dbReference type="KEGG" id="rsp:RSP_2526"/>
<dbReference type="PATRIC" id="fig|272943.9.peg.1447"/>
<dbReference type="eggNOG" id="COG0713">
    <property type="taxonomic scope" value="Bacteria"/>
</dbReference>
<dbReference type="OrthoDB" id="9811124at2"/>
<dbReference type="PhylomeDB" id="Q3J3E7"/>
<dbReference type="Proteomes" id="UP000002703">
    <property type="component" value="Chromosome 1"/>
</dbReference>
<dbReference type="GO" id="GO:0030964">
    <property type="term" value="C:NADH dehydrogenase complex"/>
    <property type="evidence" value="ECO:0007669"/>
    <property type="project" value="TreeGrafter"/>
</dbReference>
<dbReference type="GO" id="GO:0005886">
    <property type="term" value="C:plasma membrane"/>
    <property type="evidence" value="ECO:0007669"/>
    <property type="project" value="UniProtKB-SubCell"/>
</dbReference>
<dbReference type="GO" id="GO:0050136">
    <property type="term" value="F:NADH:ubiquinone reductase (non-electrogenic) activity"/>
    <property type="evidence" value="ECO:0007669"/>
    <property type="project" value="UniProtKB-UniRule"/>
</dbReference>
<dbReference type="GO" id="GO:0048038">
    <property type="term" value="F:quinone binding"/>
    <property type="evidence" value="ECO:0007669"/>
    <property type="project" value="UniProtKB-KW"/>
</dbReference>
<dbReference type="GO" id="GO:0042773">
    <property type="term" value="P:ATP synthesis coupled electron transport"/>
    <property type="evidence" value="ECO:0007669"/>
    <property type="project" value="InterPro"/>
</dbReference>
<dbReference type="FunFam" id="1.10.287.3510:FF:000001">
    <property type="entry name" value="NADH-quinone oxidoreductase subunit K"/>
    <property type="match status" value="1"/>
</dbReference>
<dbReference type="Gene3D" id="1.10.287.3510">
    <property type="match status" value="1"/>
</dbReference>
<dbReference type="HAMAP" id="MF_01456">
    <property type="entry name" value="NDH1_NuoK"/>
    <property type="match status" value="1"/>
</dbReference>
<dbReference type="InterPro" id="IPR001133">
    <property type="entry name" value="NADH_UbQ_OxRdtase_chain4L/K"/>
</dbReference>
<dbReference type="InterPro" id="IPR039428">
    <property type="entry name" value="NUOK/Mnh_C1-like"/>
</dbReference>
<dbReference type="NCBIfam" id="NF004320">
    <property type="entry name" value="PRK05715.1-2"/>
    <property type="match status" value="1"/>
</dbReference>
<dbReference type="NCBIfam" id="NF004321">
    <property type="entry name" value="PRK05715.1-3"/>
    <property type="match status" value="1"/>
</dbReference>
<dbReference type="NCBIfam" id="NF004323">
    <property type="entry name" value="PRK05715.1-5"/>
    <property type="match status" value="1"/>
</dbReference>
<dbReference type="PANTHER" id="PTHR11434:SF21">
    <property type="entry name" value="NADH DEHYDROGENASE SUBUNIT 4L-RELATED"/>
    <property type="match status" value="1"/>
</dbReference>
<dbReference type="PANTHER" id="PTHR11434">
    <property type="entry name" value="NADH-UBIQUINONE OXIDOREDUCTASE SUBUNIT ND4L"/>
    <property type="match status" value="1"/>
</dbReference>
<dbReference type="Pfam" id="PF00420">
    <property type="entry name" value="Oxidored_q2"/>
    <property type="match status" value="1"/>
</dbReference>
<name>NUOK_CERS4</name>
<evidence type="ECO:0000255" key="1">
    <source>
        <dbReference type="HAMAP-Rule" id="MF_01456"/>
    </source>
</evidence>
<reference key="1">
    <citation type="submission" date="2005-09" db="EMBL/GenBank/DDBJ databases">
        <title>Complete sequence of chromosome 1 of Rhodobacter sphaeroides 2.4.1.</title>
        <authorList>
            <person name="Copeland A."/>
            <person name="Lucas S."/>
            <person name="Lapidus A."/>
            <person name="Barry K."/>
            <person name="Detter J.C."/>
            <person name="Glavina T."/>
            <person name="Hammon N."/>
            <person name="Israni S."/>
            <person name="Pitluck S."/>
            <person name="Richardson P."/>
            <person name="Mackenzie C."/>
            <person name="Choudhary M."/>
            <person name="Larimer F."/>
            <person name="Hauser L.J."/>
            <person name="Land M."/>
            <person name="Donohue T.J."/>
            <person name="Kaplan S."/>
        </authorList>
    </citation>
    <scope>NUCLEOTIDE SEQUENCE [LARGE SCALE GENOMIC DNA]</scope>
    <source>
        <strain>ATCC 17023 / DSM 158 / JCM 6121 / CCUG 31486 / LMG 2827 / NBRC 12203 / NCIMB 8253 / ATH 2.4.1.</strain>
    </source>
</reference>
<organism>
    <name type="scientific">Cereibacter sphaeroides (strain ATCC 17023 / DSM 158 / JCM 6121 / CCUG 31486 / LMG 2827 / NBRC 12203 / NCIMB 8253 / ATH 2.4.1.)</name>
    <name type="common">Rhodobacter sphaeroides</name>
    <dbReference type="NCBI Taxonomy" id="272943"/>
    <lineage>
        <taxon>Bacteria</taxon>
        <taxon>Pseudomonadati</taxon>
        <taxon>Pseudomonadota</taxon>
        <taxon>Alphaproteobacteria</taxon>
        <taxon>Rhodobacterales</taxon>
        <taxon>Paracoccaceae</taxon>
        <taxon>Cereibacter</taxon>
    </lineage>
</organism>
<sequence>MVGLEHYLTVSAALLVIGIFGIFLNRKNVIVILMSIELMLLAVNINLVAFSSFLGDLTGQVFTLFVLTVAAAEAAIGLAILVTFFRNRGTIDVEDVNVMKG</sequence>
<proteinExistence type="inferred from homology"/>
<keyword id="KW-0997">Cell inner membrane</keyword>
<keyword id="KW-1003">Cell membrane</keyword>
<keyword id="KW-0472">Membrane</keyword>
<keyword id="KW-0520">NAD</keyword>
<keyword id="KW-0874">Quinone</keyword>
<keyword id="KW-1185">Reference proteome</keyword>
<keyword id="KW-1278">Translocase</keyword>
<keyword id="KW-0812">Transmembrane</keyword>
<keyword id="KW-1133">Transmembrane helix</keyword>
<keyword id="KW-0813">Transport</keyword>
<keyword id="KW-0830">Ubiquinone</keyword>
<protein>
    <recommendedName>
        <fullName evidence="1">NADH-quinone oxidoreductase subunit K</fullName>
        <ecNumber evidence="1">7.1.1.-</ecNumber>
    </recommendedName>
    <alternativeName>
        <fullName evidence="1">NADH dehydrogenase I subunit K</fullName>
    </alternativeName>
    <alternativeName>
        <fullName evidence="1">NDH-1 subunit K</fullName>
    </alternativeName>
</protein>
<gene>
    <name evidence="1" type="primary">nuoK</name>
    <name type="ordered locus">RHOS4_11190</name>
    <name type="ORF">RSP_2526</name>
</gene>
<feature type="chain" id="PRO_0000390199" description="NADH-quinone oxidoreductase subunit K">
    <location>
        <begin position="1"/>
        <end position="101"/>
    </location>
</feature>
<feature type="transmembrane region" description="Helical" evidence="1">
    <location>
        <begin position="4"/>
        <end position="24"/>
    </location>
</feature>
<feature type="transmembrane region" description="Helical" evidence="1">
    <location>
        <begin position="30"/>
        <end position="50"/>
    </location>
</feature>
<feature type="transmembrane region" description="Helical" evidence="1">
    <location>
        <begin position="65"/>
        <end position="85"/>
    </location>
</feature>